<name>3L255_OPHHA</name>
<reference key="1">
    <citation type="journal article" date="2004" name="Toxicon">
        <title>Cloning and purification of alpha-neurotoxins from king cobra (Ophiophagus hannah).</title>
        <authorList>
            <person name="He Y.-Y."/>
            <person name="Lee W.-H."/>
            <person name="Zhang Y."/>
        </authorList>
    </citation>
    <scope>NUCLEOTIDE SEQUENCE [MRNA]</scope>
    <scope>PROTEIN SEQUENCE OF 22-41</scope>
    <scope>TOXIC DOSE</scope>
    <scope>SUBCELLULAR LOCATION</scope>
    <scope>TISSUE SPECIFICITY</scope>
    <source>
        <strain evidence="5">Southern China</strain>
        <tissue evidence="5">Venom</tissue>
        <tissue evidence="5">Venom gland</tissue>
    </source>
</reference>
<reference key="2">
    <citation type="journal article" date="1994" name="Toxicon">
        <title>Purification, sequence and pharmacological studies of a new alpha-neurotoxin from Ophiophagus hannah venom.</title>
        <authorList>
            <person name="Song J."/>
            <person name="Chung M.C.M."/>
            <person name="Xiong Y."/>
            <person name="Wang W."/>
            <person name="Pu X."/>
        </authorList>
    </citation>
    <scope>PROTEIN SEQUENCE OF 22-93</scope>
    <scope>SUBCELLULAR LOCATION</scope>
    <source>
        <tissue>Venom</tissue>
    </source>
</reference>
<reference key="3">
    <citation type="journal article" date="2022" name="Front. Pharmacol.">
        <title>Isolation and Pharmacological Characterization of alpha-Elapitoxin-Oh3a, a Long-Chain Post-Synaptic Neurotoxin From King Cobra (Ophiophagus hannah) Venom.</title>
        <authorList>
            <person name="Huynh T.M."/>
            <person name="Silva A."/>
            <person name="Isbister G.K."/>
            <person name="Hodgson W.C."/>
        </authorList>
    </citation>
    <scope>IDENTIFICATION BY MASS SPECTROMETRY</scope>
    <scope>FUNCTION</scope>
    <scope>SUBCELLULAR LOCATION</scope>
    <scope>TISSUE SPECIFICITY</scope>
    <source>
        <strain evidence="6">Indonesia</strain>
        <tissue evidence="6">Venom</tissue>
    </source>
</reference>
<keyword id="KW-0002">3D-structure</keyword>
<keyword id="KW-0008">Acetylcholine receptor inhibiting toxin</keyword>
<keyword id="KW-0903">Direct protein sequencing</keyword>
<keyword id="KW-1015">Disulfide bond</keyword>
<keyword id="KW-0872">Ion channel impairing toxin</keyword>
<keyword id="KW-0528">Neurotoxin</keyword>
<keyword id="KW-0629">Postsynaptic neurotoxin</keyword>
<keyword id="KW-0964">Secreted</keyword>
<keyword id="KW-0732">Signal</keyword>
<keyword id="KW-0800">Toxin</keyword>
<accession>Q53B58</accession>
<organism>
    <name type="scientific">Ophiophagus hannah</name>
    <name type="common">King cobra</name>
    <name type="synonym">Naja hannah</name>
    <dbReference type="NCBI Taxonomy" id="8665"/>
    <lineage>
        <taxon>Eukaryota</taxon>
        <taxon>Metazoa</taxon>
        <taxon>Chordata</taxon>
        <taxon>Craniata</taxon>
        <taxon>Vertebrata</taxon>
        <taxon>Euteleostomi</taxon>
        <taxon>Lepidosauria</taxon>
        <taxon>Squamata</taxon>
        <taxon>Bifurcata</taxon>
        <taxon>Unidentata</taxon>
        <taxon>Episquamata</taxon>
        <taxon>Toxicofera</taxon>
        <taxon>Serpentes</taxon>
        <taxon>Colubroidea</taxon>
        <taxon>Elapidae</taxon>
        <taxon>Elapinae</taxon>
        <taxon>Ophiophagus</taxon>
    </lineage>
</organism>
<sequence>MKTLLLTLVVVTIVCLDLGYTTKCYVTPDVKSETCPAGQDICYTETWCDAWCTSRGKRVNLGCAATCPIVKPGVEIKCCSTDNCNPFPTRKRP</sequence>
<comment type="function">
    <text evidence="3">Binds to muscular and neuronal nicotinic acetylcholine receptor (nAChR) and inhibits acetylcholine from binding to the receptor, thereby impairing neuromuscular and neuronal transmission (PubMed:35341214). Pseudo-irreversibly inhibits twitches in chick biventer cervicis nerve-muscle preparations in a concentration-dependent manner (PubMed:35341214).</text>
</comment>
<comment type="subcellular location">
    <subcellularLocation>
        <location evidence="2 3 4">Secreted</location>
    </subcellularLocation>
</comment>
<comment type="tissue specificity">
    <text evidence="2 8">Expressed by the venom gland.</text>
</comment>
<comment type="mass spectrometry"/>
<comment type="toxic dose">
    <text evidence="2">LD(50) is 120 ug/kg by intraperitoneal injection into mice.</text>
</comment>
<comment type="similarity">
    <text evidence="7">Belongs to the three-finger toxin family. Long-chain subfamily. Type II alpha-neurotoxin sub-subfamily.</text>
</comment>
<dbReference type="EMBL" id="AY596928">
    <property type="protein sequence ID" value="AAT97250.1"/>
    <property type="molecule type" value="mRNA"/>
</dbReference>
<dbReference type="PDB" id="7ULQ">
    <property type="method" value="X-ray"/>
    <property type="resolution" value="2.20 A"/>
    <property type="chains" value="A/B/C/D/E/F/G/H/I/J/K/L=22-93"/>
</dbReference>
<dbReference type="PDBsum" id="7ULQ"/>
<dbReference type="SMR" id="Q53B58"/>
<dbReference type="TopDownProteomics" id="Q53B58"/>
<dbReference type="GO" id="GO:0005615">
    <property type="term" value="C:extracellular space"/>
    <property type="evidence" value="ECO:0000314"/>
    <property type="project" value="UniProtKB"/>
</dbReference>
<dbReference type="GO" id="GO:0030550">
    <property type="term" value="F:acetylcholine receptor inhibitor activity"/>
    <property type="evidence" value="ECO:0000314"/>
    <property type="project" value="UniProtKB"/>
</dbReference>
<dbReference type="GO" id="GO:0008200">
    <property type="term" value="F:ion channel inhibitor activity"/>
    <property type="evidence" value="ECO:0000314"/>
    <property type="project" value="UniProtKB"/>
</dbReference>
<dbReference type="GO" id="GO:0090729">
    <property type="term" value="F:toxin activity"/>
    <property type="evidence" value="ECO:0000314"/>
    <property type="project" value="UniProtKB"/>
</dbReference>
<dbReference type="GO" id="GO:0044509">
    <property type="term" value="P:venom-mediated perturbation of signal transduction in another organism"/>
    <property type="evidence" value="ECO:0000314"/>
    <property type="project" value="UniProtKB"/>
</dbReference>
<dbReference type="CDD" id="cd00206">
    <property type="entry name" value="TFP_snake_toxin"/>
    <property type="match status" value="1"/>
</dbReference>
<dbReference type="Gene3D" id="2.10.60.10">
    <property type="entry name" value="CD59"/>
    <property type="match status" value="1"/>
</dbReference>
<dbReference type="InterPro" id="IPR003571">
    <property type="entry name" value="Snake_3FTx"/>
</dbReference>
<dbReference type="InterPro" id="IPR045860">
    <property type="entry name" value="Snake_toxin-like_sf"/>
</dbReference>
<dbReference type="InterPro" id="IPR018354">
    <property type="entry name" value="Snake_toxin_con_site"/>
</dbReference>
<dbReference type="InterPro" id="IPR054131">
    <property type="entry name" value="Toxin_cobra-type"/>
</dbReference>
<dbReference type="Pfam" id="PF21947">
    <property type="entry name" value="Toxin_cobra-type"/>
    <property type="match status" value="1"/>
</dbReference>
<dbReference type="SUPFAM" id="SSF57302">
    <property type="entry name" value="Snake toxin-like"/>
    <property type="match status" value="1"/>
</dbReference>
<dbReference type="PROSITE" id="PS00272">
    <property type="entry name" value="SNAKE_TOXIN"/>
    <property type="match status" value="1"/>
</dbReference>
<evidence type="ECO:0000250" key="1">
    <source>
        <dbReference type="UniProtKB" id="P01391"/>
    </source>
</evidence>
<evidence type="ECO:0000269" key="2">
    <source>
    </source>
</evidence>
<evidence type="ECO:0000269" key="3">
    <source>
    </source>
</evidence>
<evidence type="ECO:0000269" key="4">
    <source ref="2"/>
</evidence>
<evidence type="ECO:0000303" key="5">
    <source>
    </source>
</evidence>
<evidence type="ECO:0000303" key="6">
    <source>
    </source>
</evidence>
<evidence type="ECO:0000305" key="7"/>
<evidence type="ECO:0000305" key="8">
    <source>
    </source>
</evidence>
<evidence type="ECO:0007829" key="9">
    <source>
        <dbReference type="PDB" id="7ULQ"/>
    </source>
</evidence>
<protein>
    <recommendedName>
        <fullName evidence="6">Alpha-elapitoxin-Oh3a</fullName>
    </recommendedName>
    <alternativeName>
        <fullName evidence="5">CM-11</fullName>
    </alternativeName>
    <alternativeName>
        <fullName evidence="5">Long neurotoxin OH-55</fullName>
    </alternativeName>
</protein>
<proteinExistence type="evidence at protein level"/>
<feature type="signal peptide" evidence="2 4">
    <location>
        <begin position="1"/>
        <end position="21"/>
    </location>
</feature>
<feature type="chain" id="PRO_5000093321" description="Alpha-elapitoxin-Oh3a">
    <location>
        <begin position="22"/>
        <end position="93"/>
    </location>
</feature>
<feature type="disulfide bond" evidence="1">
    <location>
        <begin position="24"/>
        <end position="42"/>
    </location>
</feature>
<feature type="disulfide bond" evidence="1">
    <location>
        <begin position="35"/>
        <end position="63"/>
    </location>
</feature>
<feature type="disulfide bond" evidence="1">
    <location>
        <begin position="48"/>
        <end position="52"/>
    </location>
</feature>
<feature type="disulfide bond" evidence="1">
    <location>
        <begin position="67"/>
        <end position="78"/>
    </location>
</feature>
<feature type="disulfide bond" evidence="1">
    <location>
        <begin position="79"/>
        <end position="84"/>
    </location>
</feature>
<feature type="strand" evidence="9">
    <location>
        <begin position="23"/>
        <end position="26"/>
    </location>
</feature>
<feature type="turn" evidence="9">
    <location>
        <begin position="27"/>
        <end position="30"/>
    </location>
</feature>
<feature type="strand" evidence="9">
    <location>
        <begin position="31"/>
        <end position="34"/>
    </location>
</feature>
<feature type="strand" evidence="9">
    <location>
        <begin position="41"/>
        <end position="47"/>
    </location>
</feature>
<feature type="helix" evidence="9">
    <location>
        <begin position="52"/>
        <end position="55"/>
    </location>
</feature>
<feature type="strand" evidence="9">
    <location>
        <begin position="58"/>
        <end position="66"/>
    </location>
</feature>
<feature type="strand" evidence="9">
    <location>
        <begin position="74"/>
        <end position="79"/>
    </location>
</feature>